<comment type="function">
    <text evidence="1">ATP-binding (A) component of a common energy-coupling factor (ECF) ABC-transporter complex. Unlike classic ABC transporters this ECF transporter provides the energy necessary to transport a number of different substrates.</text>
</comment>
<comment type="subunit">
    <text evidence="1">Forms a stable energy-coupling factor (ECF) transporter complex composed of 2 membrane-embedded substrate-binding proteins (S component), 2 ATP-binding proteins (A component) and 2 transmembrane proteins (T component).</text>
</comment>
<comment type="subcellular location">
    <subcellularLocation>
        <location evidence="1">Cell membrane</location>
        <topology evidence="1">Peripheral membrane protein</topology>
    </subcellularLocation>
</comment>
<comment type="similarity">
    <text evidence="1">Belongs to the ABC transporter superfamily. Energy-coupling factor EcfA family.</text>
</comment>
<organism>
    <name type="scientific">Lactobacillus delbrueckii subsp. bulgaricus (strain ATCC 11842 / DSM 20081 / BCRC 10696 / JCM 1002 / NBRC 13953 / NCIMB 11778 / NCTC 12712 / WDCM 00102 / Lb 14)</name>
    <dbReference type="NCBI Taxonomy" id="390333"/>
    <lineage>
        <taxon>Bacteria</taxon>
        <taxon>Bacillati</taxon>
        <taxon>Bacillota</taxon>
        <taxon>Bacilli</taxon>
        <taxon>Lactobacillales</taxon>
        <taxon>Lactobacillaceae</taxon>
        <taxon>Lactobacillus</taxon>
    </lineage>
</organism>
<keyword id="KW-0002">3D-structure</keyword>
<keyword id="KW-0067">ATP-binding</keyword>
<keyword id="KW-1003">Cell membrane</keyword>
<keyword id="KW-0472">Membrane</keyword>
<keyword id="KW-0547">Nucleotide-binding</keyword>
<keyword id="KW-1185">Reference proteome</keyword>
<keyword id="KW-1278">Translocase</keyword>
<keyword id="KW-0813">Transport</keyword>
<name>ECFA1_LACDA</name>
<evidence type="ECO:0000255" key="1">
    <source>
        <dbReference type="HAMAP-Rule" id="MF_01710"/>
    </source>
</evidence>
<evidence type="ECO:0007829" key="2">
    <source>
        <dbReference type="PDB" id="5JSZ"/>
    </source>
</evidence>
<evidence type="ECO:0007829" key="3">
    <source>
        <dbReference type="PDB" id="6FNP"/>
    </source>
</evidence>
<evidence type="ECO:0007829" key="4">
    <source>
        <dbReference type="PDB" id="6ZG3"/>
    </source>
</evidence>
<evidence type="ECO:0007829" key="5">
    <source>
        <dbReference type="PDB" id="7NNT"/>
    </source>
</evidence>
<evidence type="ECO:0007829" key="6">
    <source>
        <dbReference type="PDB" id="7NNU"/>
    </source>
</evidence>
<evidence type="ECO:0007829" key="7">
    <source>
        <dbReference type="PDB" id="8BMS"/>
    </source>
</evidence>
<proteinExistence type="evidence at protein level"/>
<reference key="1">
    <citation type="journal article" date="2006" name="Proc. Natl. Acad. Sci. U.S.A.">
        <title>The complete genome sequence of Lactobacillus bulgaricus reveals extensive and ongoing reductive evolution.</title>
        <authorList>
            <person name="van de Guchte M."/>
            <person name="Penaud S."/>
            <person name="Grimaldi C."/>
            <person name="Barbe V."/>
            <person name="Bryson K."/>
            <person name="Nicolas P."/>
            <person name="Robert C."/>
            <person name="Oztas S."/>
            <person name="Mangenot S."/>
            <person name="Couloux A."/>
            <person name="Loux V."/>
            <person name="Dervyn R."/>
            <person name="Bossy R."/>
            <person name="Bolotin A."/>
            <person name="Batto J.-M."/>
            <person name="Walunas T."/>
            <person name="Gibrat J.-F."/>
            <person name="Bessieres P."/>
            <person name="Weissenbach J."/>
            <person name="Ehrlich S.D."/>
            <person name="Maguin E."/>
        </authorList>
    </citation>
    <scope>NUCLEOTIDE SEQUENCE [LARGE SCALE GENOMIC DNA]</scope>
    <source>
        <strain>ATCC 11842 / DSM 20081 / BCRC 10696 / JCM 1002 / NBRC 13953 / NCIMB 11778 / NCTC 12712 / WDCM 00102 / Lb 14</strain>
    </source>
</reference>
<protein>
    <recommendedName>
        <fullName evidence="1">Energy-coupling factor transporter ATP-binding protein EcfA1</fullName>
        <shortName evidence="1">ECF transporter A component EcfA1</shortName>
        <ecNumber evidence="1">7.-.-.-</ecNumber>
    </recommendedName>
</protein>
<feature type="chain" id="PRO_0000287947" description="Energy-coupling factor transporter ATP-binding protein EcfA1">
    <location>
        <begin position="1"/>
        <end position="282"/>
    </location>
</feature>
<feature type="domain" description="ABC transporter" evidence="1">
    <location>
        <begin position="6"/>
        <end position="243"/>
    </location>
</feature>
<feature type="binding site" evidence="1">
    <location>
        <begin position="40"/>
        <end position="47"/>
    </location>
    <ligand>
        <name>ATP</name>
        <dbReference type="ChEBI" id="CHEBI:30616"/>
    </ligand>
</feature>
<feature type="strand" evidence="7">
    <location>
        <begin position="4"/>
        <end position="11"/>
    </location>
</feature>
<feature type="strand" evidence="3">
    <location>
        <begin position="17"/>
        <end position="19"/>
    </location>
</feature>
<feature type="strand" evidence="7">
    <location>
        <begin position="22"/>
        <end position="30"/>
    </location>
</feature>
<feature type="strand" evidence="7">
    <location>
        <begin position="35"/>
        <end position="40"/>
    </location>
</feature>
<feature type="helix" evidence="5">
    <location>
        <begin position="42"/>
        <end position="44"/>
    </location>
</feature>
<feature type="helix" evidence="7">
    <location>
        <begin position="46"/>
        <end position="53"/>
    </location>
</feature>
<feature type="strand" evidence="4">
    <location>
        <begin position="54"/>
        <end position="57"/>
    </location>
</feature>
<feature type="turn" evidence="7">
    <location>
        <begin position="62"/>
        <end position="64"/>
    </location>
</feature>
<feature type="strand" evidence="7">
    <location>
        <begin position="66"/>
        <end position="69"/>
    </location>
</feature>
<feature type="strand" evidence="2">
    <location>
        <begin position="72"/>
        <end position="74"/>
    </location>
</feature>
<feature type="turn" evidence="4">
    <location>
        <begin position="76"/>
        <end position="78"/>
    </location>
</feature>
<feature type="helix" evidence="7">
    <location>
        <begin position="79"/>
        <end position="83"/>
    </location>
</feature>
<feature type="strand" evidence="7">
    <location>
        <begin position="86"/>
        <end position="89"/>
    </location>
</feature>
<feature type="helix" evidence="7">
    <location>
        <begin position="93"/>
        <end position="95"/>
    </location>
</feature>
<feature type="strand" evidence="7">
    <location>
        <begin position="99"/>
        <end position="101"/>
    </location>
</feature>
<feature type="helix" evidence="7">
    <location>
        <begin position="102"/>
        <end position="112"/>
    </location>
</feature>
<feature type="helix" evidence="7">
    <location>
        <begin position="117"/>
        <end position="130"/>
    </location>
</feature>
<feature type="helix" evidence="7">
    <location>
        <begin position="134"/>
        <end position="136"/>
    </location>
</feature>
<feature type="helix" evidence="6">
    <location>
        <begin position="141"/>
        <end position="143"/>
    </location>
</feature>
<feature type="helix" evidence="7">
    <location>
        <begin position="146"/>
        <end position="158"/>
    </location>
</feature>
<feature type="strand" evidence="7">
    <location>
        <begin position="163"/>
        <end position="169"/>
    </location>
</feature>
<feature type="turn" evidence="7">
    <location>
        <begin position="170"/>
        <end position="173"/>
    </location>
</feature>
<feature type="helix" evidence="7">
    <location>
        <begin position="176"/>
        <end position="193"/>
    </location>
</feature>
<feature type="strand" evidence="7">
    <location>
        <begin position="196"/>
        <end position="200"/>
    </location>
</feature>
<feature type="helix" evidence="7">
    <location>
        <begin position="204"/>
        <end position="208"/>
    </location>
</feature>
<feature type="strand" evidence="7">
    <location>
        <begin position="210"/>
        <end position="217"/>
    </location>
</feature>
<feature type="strand" evidence="7">
    <location>
        <begin position="220"/>
        <end position="225"/>
    </location>
</feature>
<feature type="helix" evidence="7">
    <location>
        <begin position="227"/>
        <end position="230"/>
    </location>
</feature>
<feature type="helix" evidence="2">
    <location>
        <begin position="231"/>
        <end position="233"/>
    </location>
</feature>
<feature type="helix" evidence="7">
    <location>
        <begin position="234"/>
        <end position="239"/>
    </location>
</feature>
<feature type="helix" evidence="7">
    <location>
        <begin position="246"/>
        <end position="256"/>
    </location>
</feature>
<feature type="helix" evidence="7">
    <location>
        <begin position="268"/>
        <end position="280"/>
    </location>
</feature>
<gene>
    <name evidence="1" type="primary">ecfA1</name>
    <name type="synonym">cbiO1</name>
    <name type="ordered locus">Ldb0424</name>
</gene>
<accession>Q1GBJ0</accession>
<dbReference type="EC" id="7.-.-.-" evidence="1"/>
<dbReference type="EMBL" id="CR954253">
    <property type="protein sequence ID" value="CAI97259.1"/>
    <property type="molecule type" value="Genomic_DNA"/>
</dbReference>
<dbReference type="RefSeq" id="WP_011543645.1">
    <property type="nucleotide sequence ID" value="NC_008054.1"/>
</dbReference>
<dbReference type="PDB" id="5D3M">
    <property type="method" value="X-ray"/>
    <property type="resolution" value="3.30 A"/>
    <property type="chains" value="A/E=2-280"/>
</dbReference>
<dbReference type="PDB" id="5JSZ">
    <property type="method" value="X-ray"/>
    <property type="resolution" value="3.00 A"/>
    <property type="chains" value="A/E=2-282"/>
</dbReference>
<dbReference type="PDB" id="6FNP">
    <property type="method" value="X-ray"/>
    <property type="resolution" value="3.40 A"/>
    <property type="chains" value="B/F=2-282"/>
</dbReference>
<dbReference type="PDB" id="6ZG3">
    <property type="method" value="X-ray"/>
    <property type="resolution" value="2.80 A"/>
    <property type="chains" value="A/F=2-282"/>
</dbReference>
<dbReference type="PDB" id="7NNT">
    <property type="method" value="EM"/>
    <property type="resolution" value="3.40 A"/>
    <property type="chains" value="A=2-282"/>
</dbReference>
<dbReference type="PDB" id="7NNU">
    <property type="method" value="EM"/>
    <property type="resolution" value="2.70 A"/>
    <property type="chains" value="A=2-282"/>
</dbReference>
<dbReference type="PDB" id="8BMP">
    <property type="method" value="EM"/>
    <property type="resolution" value="3.20 A"/>
    <property type="chains" value="A=2-282"/>
</dbReference>
<dbReference type="PDB" id="8BMQ">
    <property type="method" value="EM"/>
    <property type="resolution" value="3.60 A"/>
    <property type="chains" value="A=2-282"/>
</dbReference>
<dbReference type="PDB" id="8BMR">
    <property type="method" value="EM"/>
    <property type="resolution" value="3.80 A"/>
    <property type="chains" value="A=2-282"/>
</dbReference>
<dbReference type="PDB" id="8BMS">
    <property type="method" value="EM"/>
    <property type="resolution" value="2.60 A"/>
    <property type="chains" value="A=2-282"/>
</dbReference>
<dbReference type="PDBsum" id="5D3M"/>
<dbReference type="PDBsum" id="5JSZ"/>
<dbReference type="PDBsum" id="6FNP"/>
<dbReference type="PDBsum" id="6ZG3"/>
<dbReference type="PDBsum" id="7NNT"/>
<dbReference type="PDBsum" id="7NNU"/>
<dbReference type="PDBsum" id="8BMP"/>
<dbReference type="PDBsum" id="8BMQ"/>
<dbReference type="PDBsum" id="8BMR"/>
<dbReference type="PDBsum" id="8BMS"/>
<dbReference type="EMDB" id="EMD-12483"/>
<dbReference type="EMDB" id="EMD-12484"/>
<dbReference type="EMDB" id="EMD-16120"/>
<dbReference type="EMDB" id="EMD-16121"/>
<dbReference type="EMDB" id="EMD-16122"/>
<dbReference type="EMDB" id="EMD-16123"/>
<dbReference type="EMDB" id="EMD-16124"/>
<dbReference type="SMR" id="Q1GBJ0"/>
<dbReference type="STRING" id="390333.Ldb0424"/>
<dbReference type="KEGG" id="ldb:Ldb0424"/>
<dbReference type="PATRIC" id="fig|390333.7.peg.381"/>
<dbReference type="eggNOG" id="COG1122">
    <property type="taxonomic scope" value="Bacteria"/>
</dbReference>
<dbReference type="HOGENOM" id="CLU_000604_1_22_9"/>
<dbReference type="BioCyc" id="LDEL390333:LDB_RS01805-MONOMER"/>
<dbReference type="EvolutionaryTrace" id="Q1GBJ0"/>
<dbReference type="Proteomes" id="UP000001259">
    <property type="component" value="Chromosome"/>
</dbReference>
<dbReference type="GO" id="GO:0043190">
    <property type="term" value="C:ATP-binding cassette (ABC) transporter complex"/>
    <property type="evidence" value="ECO:0007669"/>
    <property type="project" value="TreeGrafter"/>
</dbReference>
<dbReference type="GO" id="GO:0005524">
    <property type="term" value="F:ATP binding"/>
    <property type="evidence" value="ECO:0007669"/>
    <property type="project" value="UniProtKB-KW"/>
</dbReference>
<dbReference type="GO" id="GO:0016887">
    <property type="term" value="F:ATP hydrolysis activity"/>
    <property type="evidence" value="ECO:0007669"/>
    <property type="project" value="InterPro"/>
</dbReference>
<dbReference type="GO" id="GO:0042626">
    <property type="term" value="F:ATPase-coupled transmembrane transporter activity"/>
    <property type="evidence" value="ECO:0007669"/>
    <property type="project" value="TreeGrafter"/>
</dbReference>
<dbReference type="CDD" id="cd03225">
    <property type="entry name" value="ABC_cobalt_CbiO_domain1"/>
    <property type="match status" value="1"/>
</dbReference>
<dbReference type="FunFam" id="3.40.50.300:FF:000224">
    <property type="entry name" value="Energy-coupling factor transporter ATP-binding protein EcfA"/>
    <property type="match status" value="1"/>
</dbReference>
<dbReference type="Gene3D" id="3.40.50.300">
    <property type="entry name" value="P-loop containing nucleotide triphosphate hydrolases"/>
    <property type="match status" value="1"/>
</dbReference>
<dbReference type="InterPro" id="IPR003593">
    <property type="entry name" value="AAA+_ATPase"/>
</dbReference>
<dbReference type="InterPro" id="IPR003439">
    <property type="entry name" value="ABC_transporter-like_ATP-bd"/>
</dbReference>
<dbReference type="InterPro" id="IPR017871">
    <property type="entry name" value="ABC_transporter-like_CS"/>
</dbReference>
<dbReference type="InterPro" id="IPR015856">
    <property type="entry name" value="ABC_transpr_CbiO/EcfA_su"/>
</dbReference>
<dbReference type="InterPro" id="IPR050095">
    <property type="entry name" value="ECF_ABC_transporter_ATP-bd"/>
</dbReference>
<dbReference type="InterPro" id="IPR030947">
    <property type="entry name" value="EcfA_1"/>
</dbReference>
<dbReference type="InterPro" id="IPR027417">
    <property type="entry name" value="P-loop_NTPase"/>
</dbReference>
<dbReference type="NCBIfam" id="TIGR04520">
    <property type="entry name" value="ECF_ATPase_1"/>
    <property type="match status" value="1"/>
</dbReference>
<dbReference type="NCBIfam" id="NF010156">
    <property type="entry name" value="PRK13635.1"/>
    <property type="match status" value="1"/>
</dbReference>
<dbReference type="NCBIfam" id="NF010167">
    <property type="entry name" value="PRK13648.1"/>
    <property type="match status" value="1"/>
</dbReference>
<dbReference type="PANTHER" id="PTHR43553:SF24">
    <property type="entry name" value="ENERGY-COUPLING FACTOR TRANSPORTER ATP-BINDING PROTEIN ECFA1"/>
    <property type="match status" value="1"/>
</dbReference>
<dbReference type="PANTHER" id="PTHR43553">
    <property type="entry name" value="HEAVY METAL TRANSPORTER"/>
    <property type="match status" value="1"/>
</dbReference>
<dbReference type="Pfam" id="PF00005">
    <property type="entry name" value="ABC_tran"/>
    <property type="match status" value="1"/>
</dbReference>
<dbReference type="SMART" id="SM00382">
    <property type="entry name" value="AAA"/>
    <property type="match status" value="1"/>
</dbReference>
<dbReference type="SUPFAM" id="SSF52540">
    <property type="entry name" value="P-loop containing nucleoside triphosphate hydrolases"/>
    <property type="match status" value="1"/>
</dbReference>
<dbReference type="PROSITE" id="PS00211">
    <property type="entry name" value="ABC_TRANSPORTER_1"/>
    <property type="match status" value="1"/>
</dbReference>
<dbReference type="PROSITE" id="PS50893">
    <property type="entry name" value="ABC_TRANSPORTER_2"/>
    <property type="match status" value="1"/>
</dbReference>
<dbReference type="PROSITE" id="PS51246">
    <property type="entry name" value="CBIO"/>
    <property type="match status" value="1"/>
</dbReference>
<sequence>MSDNIISFDHVTFTYPDSPRPALSDLSFAIERGSWTALIGHNGSGKSTVSKLINGLLAPDDLDKSSITVDGVKLGADTVWEVREKVGIVFQNPDNQFVGATVSDDVAFGLENRAVPRPEMLKIVAQAVADVGMADYADSEPSNLSGGQKQRVAIAGILAVKPQVIILDESTSMLDPEGKEQILDLVRKIKEDNNLTVISITHDLEEAAGADQVLVLDDGQLLDQGKPEEIFPKVEMLKRIGLDIPFVYRLKQLLKERGIVLPDEIDDDEKLVQSLWQLNSKM</sequence>